<accession>Q9NVA2</accession>
<accession>B7Z7Z6</accession>
<accession>E9KL32</accession>
<accession>Q4W5G1</accession>
<accession>Q7L4N1</accession>
<accession>Q96SP1</accession>
<accession>Q9UFY9</accession>
<reference key="1">
    <citation type="journal article" date="2010" name="Mol. Cell. Proteomics">
        <title>Systematic mapping and functional analysis of a family of human epididymal secretory sperm-located proteins.</title>
        <authorList>
            <person name="Li J."/>
            <person name="Liu F."/>
            <person name="Wang H."/>
            <person name="Liu X."/>
            <person name="Liu J."/>
            <person name="Li N."/>
            <person name="Wan F."/>
            <person name="Wang W."/>
            <person name="Zhang C."/>
            <person name="Jin S."/>
            <person name="Liu J."/>
            <person name="Zhu P."/>
            <person name="Liu Y."/>
        </authorList>
    </citation>
    <scope>NUCLEOTIDE SEQUENCE [MRNA]</scope>
    <source>
        <tissue>Epididymis</tissue>
    </source>
</reference>
<reference key="2">
    <citation type="journal article" date="2004" name="Nat. Genet.">
        <title>Complete sequencing and characterization of 21,243 full-length human cDNAs.</title>
        <authorList>
            <person name="Ota T."/>
            <person name="Suzuki Y."/>
            <person name="Nishikawa T."/>
            <person name="Otsuki T."/>
            <person name="Sugiyama T."/>
            <person name="Irie R."/>
            <person name="Wakamatsu A."/>
            <person name="Hayashi K."/>
            <person name="Sato H."/>
            <person name="Nagai K."/>
            <person name="Kimura K."/>
            <person name="Makita H."/>
            <person name="Sekine M."/>
            <person name="Obayashi M."/>
            <person name="Nishi T."/>
            <person name="Shibahara T."/>
            <person name="Tanaka T."/>
            <person name="Ishii S."/>
            <person name="Yamamoto J."/>
            <person name="Saito K."/>
            <person name="Kawai Y."/>
            <person name="Isono Y."/>
            <person name="Nakamura Y."/>
            <person name="Nagahari K."/>
            <person name="Murakami K."/>
            <person name="Yasuda T."/>
            <person name="Iwayanagi T."/>
            <person name="Wagatsuma M."/>
            <person name="Shiratori A."/>
            <person name="Sudo H."/>
            <person name="Hosoiri T."/>
            <person name="Kaku Y."/>
            <person name="Kodaira H."/>
            <person name="Kondo H."/>
            <person name="Sugawara M."/>
            <person name="Takahashi M."/>
            <person name="Kanda K."/>
            <person name="Yokoi T."/>
            <person name="Furuya T."/>
            <person name="Kikkawa E."/>
            <person name="Omura Y."/>
            <person name="Abe K."/>
            <person name="Kamihara K."/>
            <person name="Katsuta N."/>
            <person name="Sato K."/>
            <person name="Tanikawa M."/>
            <person name="Yamazaki M."/>
            <person name="Ninomiya K."/>
            <person name="Ishibashi T."/>
            <person name="Yamashita H."/>
            <person name="Murakawa K."/>
            <person name="Fujimori K."/>
            <person name="Tanai H."/>
            <person name="Kimata M."/>
            <person name="Watanabe M."/>
            <person name="Hiraoka S."/>
            <person name="Chiba Y."/>
            <person name="Ishida S."/>
            <person name="Ono Y."/>
            <person name="Takiguchi S."/>
            <person name="Watanabe S."/>
            <person name="Yosida M."/>
            <person name="Hotuta T."/>
            <person name="Kusano J."/>
            <person name="Kanehori K."/>
            <person name="Takahashi-Fujii A."/>
            <person name="Hara H."/>
            <person name="Tanase T.-O."/>
            <person name="Nomura Y."/>
            <person name="Togiya S."/>
            <person name="Komai F."/>
            <person name="Hara R."/>
            <person name="Takeuchi K."/>
            <person name="Arita M."/>
            <person name="Imose N."/>
            <person name="Musashino K."/>
            <person name="Yuuki H."/>
            <person name="Oshima A."/>
            <person name="Sasaki N."/>
            <person name="Aotsuka S."/>
            <person name="Yoshikawa Y."/>
            <person name="Matsunawa H."/>
            <person name="Ichihara T."/>
            <person name="Shiohata N."/>
            <person name="Sano S."/>
            <person name="Moriya S."/>
            <person name="Momiyama H."/>
            <person name="Satoh N."/>
            <person name="Takami S."/>
            <person name="Terashima Y."/>
            <person name="Suzuki O."/>
            <person name="Nakagawa S."/>
            <person name="Senoh A."/>
            <person name="Mizoguchi H."/>
            <person name="Goto Y."/>
            <person name="Shimizu F."/>
            <person name="Wakebe H."/>
            <person name="Hishigaki H."/>
            <person name="Watanabe T."/>
            <person name="Sugiyama A."/>
            <person name="Takemoto M."/>
            <person name="Kawakami B."/>
            <person name="Yamazaki M."/>
            <person name="Watanabe K."/>
            <person name="Kumagai A."/>
            <person name="Itakura S."/>
            <person name="Fukuzumi Y."/>
            <person name="Fujimori Y."/>
            <person name="Komiyama M."/>
            <person name="Tashiro H."/>
            <person name="Tanigami A."/>
            <person name="Fujiwara T."/>
            <person name="Ono T."/>
            <person name="Yamada K."/>
            <person name="Fujii Y."/>
            <person name="Ozaki K."/>
            <person name="Hirao M."/>
            <person name="Ohmori Y."/>
            <person name="Kawabata A."/>
            <person name="Hikiji T."/>
            <person name="Kobatake N."/>
            <person name="Inagaki H."/>
            <person name="Ikema Y."/>
            <person name="Okamoto S."/>
            <person name="Okitani R."/>
            <person name="Kawakami T."/>
            <person name="Noguchi S."/>
            <person name="Itoh T."/>
            <person name="Shigeta K."/>
            <person name="Senba T."/>
            <person name="Matsumura K."/>
            <person name="Nakajima Y."/>
            <person name="Mizuno T."/>
            <person name="Morinaga M."/>
            <person name="Sasaki M."/>
            <person name="Togashi T."/>
            <person name="Oyama M."/>
            <person name="Hata H."/>
            <person name="Watanabe M."/>
            <person name="Komatsu T."/>
            <person name="Mizushima-Sugano J."/>
            <person name="Satoh T."/>
            <person name="Shirai Y."/>
            <person name="Takahashi Y."/>
            <person name="Nakagawa K."/>
            <person name="Okumura K."/>
            <person name="Nagase T."/>
            <person name="Nomura N."/>
            <person name="Kikuchi H."/>
            <person name="Masuho Y."/>
            <person name="Yamashita R."/>
            <person name="Nakai K."/>
            <person name="Yada T."/>
            <person name="Nakamura Y."/>
            <person name="Ohara O."/>
            <person name="Isogai T."/>
            <person name="Sugano S."/>
        </authorList>
    </citation>
    <scope>NUCLEOTIDE SEQUENCE [LARGE SCALE MRNA] (ISOFORMS 1 AND 2)</scope>
    <source>
        <tissue>Teratocarcinoma</tissue>
        <tissue>Testis</tissue>
    </source>
</reference>
<reference key="3">
    <citation type="journal article" date="2005" name="Nature">
        <title>Generation and annotation of the DNA sequences of human chromosomes 2 and 4.</title>
        <authorList>
            <person name="Hillier L.W."/>
            <person name="Graves T.A."/>
            <person name="Fulton R.S."/>
            <person name="Fulton L.A."/>
            <person name="Pepin K.H."/>
            <person name="Minx P."/>
            <person name="Wagner-McPherson C."/>
            <person name="Layman D."/>
            <person name="Wylie K."/>
            <person name="Sekhon M."/>
            <person name="Becker M.C."/>
            <person name="Fewell G.A."/>
            <person name="Delehaunty K.D."/>
            <person name="Miner T.L."/>
            <person name="Nash W.E."/>
            <person name="Kremitzki C."/>
            <person name="Oddy L."/>
            <person name="Du H."/>
            <person name="Sun H."/>
            <person name="Bradshaw-Cordum H."/>
            <person name="Ali J."/>
            <person name="Carter J."/>
            <person name="Cordes M."/>
            <person name="Harris A."/>
            <person name="Isak A."/>
            <person name="van Brunt A."/>
            <person name="Nguyen C."/>
            <person name="Du F."/>
            <person name="Courtney L."/>
            <person name="Kalicki J."/>
            <person name="Ozersky P."/>
            <person name="Abbott S."/>
            <person name="Armstrong J."/>
            <person name="Belter E.A."/>
            <person name="Caruso L."/>
            <person name="Cedroni M."/>
            <person name="Cotton M."/>
            <person name="Davidson T."/>
            <person name="Desai A."/>
            <person name="Elliott G."/>
            <person name="Erb T."/>
            <person name="Fronick C."/>
            <person name="Gaige T."/>
            <person name="Haakenson W."/>
            <person name="Haglund K."/>
            <person name="Holmes A."/>
            <person name="Harkins R."/>
            <person name="Kim K."/>
            <person name="Kruchowski S.S."/>
            <person name="Strong C.M."/>
            <person name="Grewal N."/>
            <person name="Goyea E."/>
            <person name="Hou S."/>
            <person name="Levy A."/>
            <person name="Martinka S."/>
            <person name="Mead K."/>
            <person name="McLellan M.D."/>
            <person name="Meyer R."/>
            <person name="Randall-Maher J."/>
            <person name="Tomlinson C."/>
            <person name="Dauphin-Kohlberg S."/>
            <person name="Kozlowicz-Reilly A."/>
            <person name="Shah N."/>
            <person name="Swearengen-Shahid S."/>
            <person name="Snider J."/>
            <person name="Strong J.T."/>
            <person name="Thompson J."/>
            <person name="Yoakum M."/>
            <person name="Leonard S."/>
            <person name="Pearman C."/>
            <person name="Trani L."/>
            <person name="Radionenko M."/>
            <person name="Waligorski J.E."/>
            <person name="Wang C."/>
            <person name="Rock S.M."/>
            <person name="Tin-Wollam A.-M."/>
            <person name="Maupin R."/>
            <person name="Latreille P."/>
            <person name="Wendl M.C."/>
            <person name="Yang S.-P."/>
            <person name="Pohl C."/>
            <person name="Wallis J.W."/>
            <person name="Spieth J."/>
            <person name="Bieri T.A."/>
            <person name="Berkowicz N."/>
            <person name="Nelson J.O."/>
            <person name="Osborne J."/>
            <person name="Ding L."/>
            <person name="Meyer R."/>
            <person name="Sabo A."/>
            <person name="Shotland Y."/>
            <person name="Sinha P."/>
            <person name="Wohldmann P.E."/>
            <person name="Cook L.L."/>
            <person name="Hickenbotham M.T."/>
            <person name="Eldred J."/>
            <person name="Williams D."/>
            <person name="Jones T.A."/>
            <person name="She X."/>
            <person name="Ciccarelli F.D."/>
            <person name="Izaurralde E."/>
            <person name="Taylor J."/>
            <person name="Schmutz J."/>
            <person name="Myers R.M."/>
            <person name="Cox D.R."/>
            <person name="Huang X."/>
            <person name="McPherson J.D."/>
            <person name="Mardis E.R."/>
            <person name="Clifton S.W."/>
            <person name="Warren W.C."/>
            <person name="Chinwalla A.T."/>
            <person name="Eddy S.R."/>
            <person name="Marra M.A."/>
            <person name="Ovcharenko I."/>
            <person name="Furey T.S."/>
            <person name="Miller W."/>
            <person name="Eichler E.E."/>
            <person name="Bork P."/>
            <person name="Suyama M."/>
            <person name="Torrents D."/>
            <person name="Waterston R.H."/>
            <person name="Wilson R.K."/>
        </authorList>
    </citation>
    <scope>NUCLEOTIDE SEQUENCE [LARGE SCALE GENOMIC DNA]</scope>
</reference>
<reference key="4">
    <citation type="submission" date="2005-07" db="EMBL/GenBank/DDBJ databases">
        <authorList>
            <person name="Mural R.J."/>
            <person name="Istrail S."/>
            <person name="Sutton G."/>
            <person name="Florea L."/>
            <person name="Halpern A.L."/>
            <person name="Mobarry C.M."/>
            <person name="Lippert R."/>
            <person name="Walenz B."/>
            <person name="Shatkay H."/>
            <person name="Dew I."/>
            <person name="Miller J.R."/>
            <person name="Flanigan M.J."/>
            <person name="Edwards N.J."/>
            <person name="Bolanos R."/>
            <person name="Fasulo D."/>
            <person name="Halldorsson B.V."/>
            <person name="Hannenhalli S."/>
            <person name="Turner R."/>
            <person name="Yooseph S."/>
            <person name="Lu F."/>
            <person name="Nusskern D.R."/>
            <person name="Shue B.C."/>
            <person name="Zheng X.H."/>
            <person name="Zhong F."/>
            <person name="Delcher A.L."/>
            <person name="Huson D.H."/>
            <person name="Kravitz S.A."/>
            <person name="Mouchard L."/>
            <person name="Reinert K."/>
            <person name="Remington K.A."/>
            <person name="Clark A.G."/>
            <person name="Waterman M.S."/>
            <person name="Eichler E.E."/>
            <person name="Adams M.D."/>
            <person name="Hunkapiller M.W."/>
            <person name="Myers E.W."/>
            <person name="Venter J.C."/>
        </authorList>
    </citation>
    <scope>NUCLEOTIDE SEQUENCE [LARGE SCALE GENOMIC DNA]</scope>
</reference>
<reference key="5">
    <citation type="journal article" date="2004" name="Genome Res.">
        <title>The status, quality, and expansion of the NIH full-length cDNA project: the Mammalian Gene Collection (MGC).</title>
        <authorList>
            <consortium name="The MGC Project Team"/>
        </authorList>
    </citation>
    <scope>NUCLEOTIDE SEQUENCE [LARGE SCALE MRNA] (ISOFORM 1)</scope>
    <source>
        <tissue>Colon</tissue>
        <tissue>Skin</tissue>
    </source>
</reference>
<reference key="6">
    <citation type="journal article" date="2007" name="BMC Genomics">
        <title>The full-ORF clone resource of the German cDNA consortium.</title>
        <authorList>
            <person name="Bechtel S."/>
            <person name="Rosenfelder H."/>
            <person name="Duda A."/>
            <person name="Schmidt C.P."/>
            <person name="Ernst U."/>
            <person name="Wellenreuther R."/>
            <person name="Mehrle A."/>
            <person name="Schuster C."/>
            <person name="Bahr A."/>
            <person name="Bloecker H."/>
            <person name="Heubner D."/>
            <person name="Hoerlein A."/>
            <person name="Michel G."/>
            <person name="Wedler H."/>
            <person name="Koehrer K."/>
            <person name="Ottenwaelder B."/>
            <person name="Poustka A."/>
            <person name="Wiemann S."/>
            <person name="Schupp I."/>
        </authorList>
    </citation>
    <scope>NUCLEOTIDE SEQUENCE [LARGE SCALE MRNA] OF 1-337</scope>
    <source>
        <tissue>Fetal kidney</tissue>
    </source>
</reference>
<reference key="7">
    <citation type="journal article" date="2003" name="Nat. Biotechnol.">
        <title>Exploring proteomes and analyzing protein processing by mass spectrometric identification of sorted N-terminal peptides.</title>
        <authorList>
            <person name="Gevaert K."/>
            <person name="Goethals M."/>
            <person name="Martens L."/>
            <person name="Van Damme J."/>
            <person name="Staes A."/>
            <person name="Thomas G.R."/>
            <person name="Vandekerckhove J."/>
        </authorList>
    </citation>
    <scope>PROTEIN SEQUENCE OF 2-14 (ISOFORM 1)</scope>
    <scope>ACETYLATION AT ALA-2</scope>
    <source>
        <tissue>Platelet</tissue>
    </source>
</reference>
<reference key="8">
    <citation type="submission" date="2008-12" db="UniProtKB">
        <authorList>
            <person name="Lubec G."/>
            <person name="Afjehi-Sadat L."/>
            <person name="Chen W.-Q."/>
            <person name="Sun Y."/>
        </authorList>
    </citation>
    <scope>PROTEIN SEQUENCE OF 15-34; 55-79; 84-93; 96-110; 176-184; 309-336; 387-397 AND 400-418</scope>
    <scope>IDENTIFICATION BY MASS SPECTROMETRY</scope>
    <source>
        <tissue>Brain</tissue>
        <tissue>Cajal-Retzius cell</tissue>
        <tissue>Fetal brain cortex</tissue>
    </source>
</reference>
<reference key="9">
    <citation type="journal article" date="2004" name="FEBS Lett.">
        <title>Biochemical and cell biological characterization of a mammalian septin, Sept11.</title>
        <authorList>
            <person name="Hanai N."/>
            <person name="Nagata K."/>
            <person name="Kawajiri A."/>
            <person name="Shiromizu T."/>
            <person name="Saitoh N."/>
            <person name="Hasegawa Y."/>
            <person name="Murakami S."/>
            <person name="Inagaki M."/>
        </authorList>
    </citation>
    <scope>FUNCTION</scope>
    <scope>MUTAGENESIS OF GLY-48</scope>
    <scope>TISSUE SPECIFICITY</scope>
    <scope>SUBCELLULAR LOCATION</scope>
</reference>
<reference key="10">
    <citation type="journal article" date="2004" name="J. Biol. Chem.">
        <title>Biochemical and cell biological analyses of a mammalian septin complex, Sept7/9b/11.</title>
        <authorList>
            <person name="Nagata K."/>
            <person name="Asano T."/>
            <person name="Nozawa Y."/>
            <person name="Inagaki M."/>
        </authorList>
    </citation>
    <scope>INTERACTION WITH SEPTIN7 AND SEPTIN9</scope>
</reference>
<reference key="11">
    <citation type="journal article" date="2004" name="Leukemia">
        <title>FLJ10849, a septin family gene, fuses MLL in a novel leukemia cell line CNLBC1 derived from chronic neutrophilic leukemia in transformation with t(4;11)(q21;q23).</title>
        <authorList>
            <person name="Kojima K."/>
            <person name="Sakai I."/>
            <person name="Hasegawa A."/>
            <person name="Niiya H."/>
            <person name="Azuma T."/>
            <person name="Matsuo Y."/>
            <person name="Fujii N."/>
            <person name="Tanimoto M."/>
            <person name="Fujita S."/>
        </authorList>
    </citation>
    <scope>CHROMOSOMAL TRANSLOCATION WITH KMT2A/MLL1</scope>
</reference>
<reference key="12">
    <citation type="journal article" date="2005" name="J. Pathol.">
        <title>Expression profiling the human septin gene family.</title>
        <authorList>
            <person name="Hall P.A."/>
            <person name="Jung K."/>
            <person name="Hillan K.J."/>
            <person name="Russell S.E.H."/>
        </authorList>
    </citation>
    <scope>TISSUE SPECIFICITY</scope>
</reference>
<reference key="13">
    <citation type="journal article" date="2007" name="Hum. Mutat.">
        <title>SEPT9 sequence alternations causing hereditary neuralgic amyotrophy are associated with altered interactions with SEPT4/SEPT11 and resistance to Rho/Rhotekin-signaling.</title>
        <authorList>
            <person name="Sudo K."/>
            <person name="Ito H."/>
            <person name="Iwamoto I."/>
            <person name="Morishita R."/>
            <person name="Asano T."/>
            <person name="Nagata K."/>
        </authorList>
    </citation>
    <scope>SUBCELLULAR LOCATION</scope>
</reference>
<reference key="14">
    <citation type="journal article" date="2007" name="J. Biochem. Mol. Biol.">
        <title>SEPT12 interacts with SEPT6 and this interaction alters the filament structure of SEPT6 in Hela cells.</title>
        <authorList>
            <person name="Ding X."/>
            <person name="Yu W."/>
            <person name="Liu M."/>
            <person name="Shen S."/>
            <person name="Chen F."/>
            <person name="Wan B."/>
            <person name="Yu L."/>
        </authorList>
    </citation>
    <scope>INTERACTION WITH SEPTIN12</scope>
</reference>
<reference key="15">
    <citation type="journal article" date="2009" name="J. Biol. Chem.">
        <title>Septin 11 restricts InlB-mediated invasion by Listeria.</title>
        <authorList>
            <person name="Mostowy S."/>
            <person name="Danckaert A."/>
            <person name="Tham T.N."/>
            <person name="Machu C."/>
            <person name="Guadagnini S."/>
            <person name="Pizarro-Cerda J."/>
            <person name="Cossart P."/>
        </authorList>
    </citation>
    <scope>ROLE IN BACTERIAL INFECTION</scope>
</reference>
<reference key="16">
    <citation type="journal article" date="2009" name="PLoS ONE">
        <title>Septins regulate bacterial entry into host cells.</title>
        <authorList>
            <person name="Mostowy S."/>
            <person name="Nam Tham T."/>
            <person name="Danckaert A."/>
            <person name="Guadagnini S."/>
            <person name="Boisson-Dupuis S."/>
            <person name="Pizarro-Cerda J."/>
            <person name="Cossart P."/>
        </authorList>
    </citation>
    <scope>INTERACTION WITH SEPTIN9</scope>
    <scope>SUBCELLULAR LOCATION</scope>
</reference>
<reference key="17">
    <citation type="journal article" date="2011" name="BMC Syst. Biol.">
        <title>Initial characterization of the human central proteome.</title>
        <authorList>
            <person name="Burkard T.R."/>
            <person name="Planyavsky M."/>
            <person name="Kaupe I."/>
            <person name="Breitwieser F.P."/>
            <person name="Buerckstuemmer T."/>
            <person name="Bennett K.L."/>
            <person name="Superti-Furga G."/>
            <person name="Colinge J."/>
        </authorList>
    </citation>
    <scope>IDENTIFICATION BY MASS SPECTROMETRY [LARGE SCALE ANALYSIS]</scope>
</reference>
<reference key="18">
    <citation type="journal article" date="2013" name="J. Proteome Res.">
        <title>Toward a comprehensive characterization of a human cancer cell phosphoproteome.</title>
        <authorList>
            <person name="Zhou H."/>
            <person name="Di Palma S."/>
            <person name="Preisinger C."/>
            <person name="Peng M."/>
            <person name="Polat A.N."/>
            <person name="Heck A.J."/>
            <person name="Mohammed S."/>
        </authorList>
    </citation>
    <scope>PHOSPHORYLATION [LARGE SCALE ANALYSIS] AT SER-9</scope>
    <scope>IDENTIFICATION BY MASS SPECTROMETRY [LARGE SCALE ANALYSIS]</scope>
    <source>
        <tissue>Erythroleukemia</tissue>
    </source>
</reference>
<proteinExistence type="evidence at protein level"/>
<gene>
    <name evidence="14" type="primary">SEPTIN11</name>
    <name type="synonym">SEPT11</name>
</gene>
<protein>
    <recommendedName>
        <fullName>Septin-11</fullName>
    </recommendedName>
</protein>
<comment type="function">
    <text evidence="1 6 11 13">Filament-forming cytoskeletal GTPase. May play a role in cytokinesis (Potential). May play a role in the cytoarchitecture of neurons, including dendritic arborization and dendritic spines, and in GABAergic synaptic connectivity (By similarity). During Listeria monocytogenes infection, not required for the bacterial entry process, but restricts its efficacy.</text>
</comment>
<comment type="subunit">
    <text evidence="7 9 10">Septins polymerize into heterooligomeric protein complexes that form filaments, and can associate with cellular membranes, actin filaments and microtubules. Forms homooligomers. GTPase activity is required for filament formation. Interacts with SEPTIN7, SEPTIN9 and SEPTIN12.</text>
</comment>
<comment type="interaction">
    <interactant intactId="EBI-957999">
        <id>Q9NVA2</id>
    </interactant>
    <interactant intactId="EBI-10269566">
        <id>Q8NDC4</id>
        <label>MORN4</label>
    </interactant>
    <organismsDiffer>false</organismsDiffer>
    <experiments>3</experiments>
</comment>
<comment type="interaction">
    <interactant intactId="EBI-957999">
        <id>Q9NVA2</id>
    </interactant>
    <interactant intactId="EBI-693002">
        <id>Q8WYJ6</id>
        <label>SEPTIN1</label>
    </interactant>
    <organismsDiffer>false</organismsDiffer>
    <experiments>5</experiments>
</comment>
<comment type="interaction">
    <interactant intactId="EBI-957999">
        <id>Q9NVA2</id>
    </interactant>
    <interactant intactId="EBI-373345">
        <id>Q99719</id>
        <label>SEPTIN5</label>
    </interactant>
    <organismsDiffer>false</organismsDiffer>
    <experiments>13</experiments>
</comment>
<comment type="interaction">
    <interactant intactId="EBI-957999">
        <id>Q9NVA2</id>
    </interactant>
    <interactant intactId="EBI-2009373">
        <id>Q16181</id>
        <label>SEPTIN7</label>
    </interactant>
    <organismsDiffer>false</organismsDiffer>
    <experiments>4</experiments>
</comment>
<comment type="interaction">
    <interactant intactId="EBI-957999">
        <id>Q9NVA2</id>
    </interactant>
    <interactant intactId="EBI-851542">
        <id>Q9UHD8</id>
        <label>SEPTIN9</label>
    </interactant>
    <organismsDiffer>false</organismsDiffer>
    <experiments>6</experiments>
</comment>
<comment type="subcellular location">
    <subcellularLocation>
        <location>Cytoplasm</location>
        <location>Cytoskeleton</location>
    </subcellularLocation>
    <subcellularLocation>
        <location>Synapse</location>
    </subcellularLocation>
    <subcellularLocation>
        <location>Cell projection</location>
        <location>Dendritic spine</location>
    </subcellularLocation>
    <subcellularLocation>
        <location evidence="1">Cell projection</location>
        <location evidence="1">Axon</location>
    </subcellularLocation>
    <text>Partly colocalizes with stress fibers and microtubules. During bacterial infection, displays a collar shape structure next to actin at the pole of invading bacteria.</text>
</comment>
<comment type="alternative products">
    <event type="alternative splicing"/>
    <isoform>
        <id>Q9NVA2-1</id>
        <name>1</name>
        <sequence type="displayed"/>
    </isoform>
    <isoform>
        <id>Q9NVA2-2</id>
        <name>2</name>
        <sequence type="described" ref="VSP_038320"/>
    </isoform>
</comment>
<comment type="tissue specificity">
    <text evidence="6 8">Widely expressed, except in leukocytes.</text>
</comment>
<comment type="disease">
    <text>A chromosomal aberration involving SEPTIN11 may be a cause of chronic neutrophilic leukemia. Translocation t(4;11)(q21;q23) with KMT2A/MLL1.</text>
</comment>
<comment type="similarity">
    <text evidence="3">Belongs to the TRAFAC class TrmE-Era-EngA-EngB-Septin-like GTPase superfamily. Septin GTPase family.</text>
</comment>
<comment type="sequence caution" evidence="13">
    <conflict type="erroneous initiation">
        <sequence resource="EMBL-CDS" id="BAB55250"/>
    </conflict>
</comment>
<comment type="sequence caution" evidence="13">
    <conflict type="miscellaneous discrepancy">
        <sequence resource="EMBL-CDS" id="CAB53741"/>
    </conflict>
    <text>Contaminating sequence. Potential poly-A sequence.</text>
</comment>
<dbReference type="EMBL" id="GU727629">
    <property type="protein sequence ID" value="ADU87631.1"/>
    <property type="molecule type" value="mRNA"/>
</dbReference>
<dbReference type="EMBL" id="AK001711">
    <property type="protein sequence ID" value="BAA91853.1"/>
    <property type="molecule type" value="mRNA"/>
</dbReference>
<dbReference type="EMBL" id="AK027633">
    <property type="protein sequence ID" value="BAB55250.1"/>
    <property type="status" value="ALT_INIT"/>
    <property type="molecule type" value="mRNA"/>
</dbReference>
<dbReference type="EMBL" id="AK302700">
    <property type="protein sequence ID" value="BAH13782.1"/>
    <property type="molecule type" value="mRNA"/>
</dbReference>
<dbReference type="EMBL" id="AC104687">
    <property type="protein sequence ID" value="AAY40922.1"/>
    <property type="molecule type" value="Genomic_DNA"/>
</dbReference>
<dbReference type="EMBL" id="AC111196">
    <property type="status" value="NOT_ANNOTATED_CDS"/>
    <property type="molecule type" value="Genomic_DNA"/>
</dbReference>
<dbReference type="EMBL" id="CH471057">
    <property type="protein sequence ID" value="EAX05805.1"/>
    <property type="molecule type" value="Genomic_DNA"/>
</dbReference>
<dbReference type="EMBL" id="BC008083">
    <property type="protein sequence ID" value="AAH08083.3"/>
    <property type="molecule type" value="mRNA"/>
</dbReference>
<dbReference type="EMBL" id="BC063615">
    <property type="protein sequence ID" value="AAH63615.1"/>
    <property type="molecule type" value="mRNA"/>
</dbReference>
<dbReference type="EMBL" id="AL110300">
    <property type="protein sequence ID" value="CAB53741.2"/>
    <property type="status" value="ALT_SEQ"/>
    <property type="molecule type" value="mRNA"/>
</dbReference>
<dbReference type="CCDS" id="CCDS34018.1">
    <molecule id="Q9NVA2-1"/>
</dbReference>
<dbReference type="CCDS" id="CCDS77931.1">
    <molecule id="Q9NVA2-2"/>
</dbReference>
<dbReference type="RefSeq" id="NP_001293076.1">
    <molecule id="Q9NVA2-2"/>
    <property type="nucleotide sequence ID" value="NM_001306147.2"/>
</dbReference>
<dbReference type="RefSeq" id="NP_060713.1">
    <molecule id="Q9NVA2-1"/>
    <property type="nucleotide sequence ID" value="NM_018243.4"/>
</dbReference>
<dbReference type="RefSeq" id="XP_016863889.1">
    <property type="nucleotide sequence ID" value="XM_017008400.1"/>
</dbReference>
<dbReference type="RefSeq" id="XP_047271915.1">
    <molecule id="Q9NVA2-2"/>
    <property type="nucleotide sequence ID" value="XM_047415959.1"/>
</dbReference>
<dbReference type="RefSeq" id="XP_054206463.1">
    <molecule id="Q9NVA2-2"/>
    <property type="nucleotide sequence ID" value="XM_054350488.1"/>
</dbReference>
<dbReference type="PDB" id="6UPQ">
    <property type="method" value="X-ray"/>
    <property type="resolution" value="1.86 A"/>
    <property type="chains" value="B=40-306"/>
</dbReference>
<dbReference type="PDBsum" id="6UPQ"/>
<dbReference type="SASBDB" id="Q9NVA2"/>
<dbReference type="SMR" id="Q9NVA2"/>
<dbReference type="BioGRID" id="120870">
    <property type="interactions" value="118"/>
</dbReference>
<dbReference type="DIP" id="DIP-36161N"/>
<dbReference type="FunCoup" id="Q9NVA2">
    <property type="interactions" value="918"/>
</dbReference>
<dbReference type="IntAct" id="Q9NVA2">
    <property type="interactions" value="35"/>
</dbReference>
<dbReference type="STRING" id="9606.ENSP00000422896"/>
<dbReference type="GlyCosmos" id="Q9NVA2">
    <property type="glycosylation" value="1 site, 1 glycan"/>
</dbReference>
<dbReference type="GlyGen" id="Q9NVA2">
    <property type="glycosylation" value="1 site, 1 O-linked glycan (1 site)"/>
</dbReference>
<dbReference type="iPTMnet" id="Q9NVA2"/>
<dbReference type="PhosphoSitePlus" id="Q9NVA2"/>
<dbReference type="SwissPalm" id="Q9NVA2"/>
<dbReference type="BioMuta" id="SEPT11"/>
<dbReference type="DMDM" id="50401687"/>
<dbReference type="OGP" id="Q9NVA2"/>
<dbReference type="jPOST" id="Q9NVA2"/>
<dbReference type="MassIVE" id="Q9NVA2"/>
<dbReference type="PaxDb" id="9606-ENSP00000264893"/>
<dbReference type="PeptideAtlas" id="Q9NVA2"/>
<dbReference type="ProteomicsDB" id="82771">
    <molecule id="Q9NVA2-1"/>
</dbReference>
<dbReference type="ProteomicsDB" id="82772">
    <molecule id="Q9NVA2-2"/>
</dbReference>
<dbReference type="Pumba" id="Q9NVA2"/>
<dbReference type="Antibodypedia" id="24838">
    <property type="antibodies" value="200 antibodies from 29 providers"/>
</dbReference>
<dbReference type="DNASU" id="55752"/>
<dbReference type="Ensembl" id="ENST00000264893.11">
    <molecule id="Q9NVA2-1"/>
    <property type="protein sequence ID" value="ENSP00000264893.6"/>
    <property type="gene ID" value="ENSG00000138758.12"/>
</dbReference>
<dbReference type="Ensembl" id="ENST00000510515.5">
    <molecule id="Q9NVA2-2"/>
    <property type="protein sequence ID" value="ENSP00000422896.1"/>
    <property type="gene ID" value="ENSG00000138758.12"/>
</dbReference>
<dbReference type="GeneID" id="55752"/>
<dbReference type="KEGG" id="hsa:55752"/>
<dbReference type="MANE-Select" id="ENST00000264893.11">
    <property type="protein sequence ID" value="ENSP00000264893.6"/>
    <property type="RefSeq nucleotide sequence ID" value="NM_018243.4"/>
    <property type="RefSeq protein sequence ID" value="NP_060713.1"/>
</dbReference>
<dbReference type="UCSC" id="uc003hkj.4">
    <molecule id="Q9NVA2-1"/>
    <property type="organism name" value="human"/>
</dbReference>
<dbReference type="AGR" id="HGNC:25589"/>
<dbReference type="CTD" id="55752"/>
<dbReference type="DisGeNET" id="55752"/>
<dbReference type="GeneCards" id="SEPTIN11"/>
<dbReference type="HGNC" id="HGNC:25589">
    <property type="gene designation" value="SEPTIN11"/>
</dbReference>
<dbReference type="HPA" id="ENSG00000138758">
    <property type="expression patterns" value="Low tissue specificity"/>
</dbReference>
<dbReference type="MIM" id="612887">
    <property type="type" value="gene"/>
</dbReference>
<dbReference type="neXtProt" id="NX_Q9NVA2"/>
<dbReference type="OpenTargets" id="ENSG00000138758"/>
<dbReference type="PharmGKB" id="PA128394688"/>
<dbReference type="VEuPathDB" id="HostDB:ENSG00000138758"/>
<dbReference type="eggNOG" id="KOG3859">
    <property type="taxonomic scope" value="Eukaryota"/>
</dbReference>
<dbReference type="GeneTree" id="ENSGT00940000160196"/>
<dbReference type="InParanoid" id="Q9NVA2"/>
<dbReference type="OMA" id="RNRTIMA"/>
<dbReference type="OrthoDB" id="416553at2759"/>
<dbReference type="PAN-GO" id="Q9NVA2">
    <property type="GO annotations" value="8 GO annotations based on evolutionary models"/>
</dbReference>
<dbReference type="PhylomeDB" id="Q9NVA2"/>
<dbReference type="TreeFam" id="TF101080"/>
<dbReference type="PathwayCommons" id="Q9NVA2"/>
<dbReference type="SignaLink" id="Q9NVA2"/>
<dbReference type="BioGRID-ORCS" id="55752">
    <property type="hits" value="9 hits in 1084 CRISPR screens"/>
</dbReference>
<dbReference type="CD-CODE" id="91857CE7">
    <property type="entry name" value="Nucleolus"/>
</dbReference>
<dbReference type="CD-CODE" id="FB4E32DD">
    <property type="entry name" value="Presynaptic clusters and postsynaptic densities"/>
</dbReference>
<dbReference type="ChiTaRS" id="SEPT11">
    <property type="organism name" value="human"/>
</dbReference>
<dbReference type="GeneWiki" id="SEPT11"/>
<dbReference type="GenomeRNAi" id="55752"/>
<dbReference type="Pharos" id="Q9NVA2">
    <property type="development level" value="Tbio"/>
</dbReference>
<dbReference type="PRO" id="PR:Q9NVA2"/>
<dbReference type="Proteomes" id="UP000005640">
    <property type="component" value="Chromosome 4"/>
</dbReference>
<dbReference type="RNAct" id="Q9NVA2">
    <property type="molecule type" value="protein"/>
</dbReference>
<dbReference type="Bgee" id="ENSG00000138758">
    <property type="expression patterns" value="Expressed in ventricular zone and 212 other cell types or tissues"/>
</dbReference>
<dbReference type="ExpressionAtlas" id="Q9NVA2">
    <property type="expression patterns" value="baseline and differential"/>
</dbReference>
<dbReference type="GO" id="GO:0030424">
    <property type="term" value="C:axon"/>
    <property type="evidence" value="ECO:0007669"/>
    <property type="project" value="UniProtKB-SubCell"/>
</dbReference>
<dbReference type="GO" id="GO:0032153">
    <property type="term" value="C:cell division site"/>
    <property type="evidence" value="ECO:0000318"/>
    <property type="project" value="GO_Central"/>
</dbReference>
<dbReference type="GO" id="GO:0043197">
    <property type="term" value="C:dendritic spine"/>
    <property type="evidence" value="ECO:0007669"/>
    <property type="project" value="UniProtKB-SubCell"/>
</dbReference>
<dbReference type="GO" id="GO:0015630">
    <property type="term" value="C:microtubule cytoskeleton"/>
    <property type="evidence" value="ECO:0000318"/>
    <property type="project" value="GO_Central"/>
</dbReference>
<dbReference type="GO" id="GO:0031105">
    <property type="term" value="C:septin complex"/>
    <property type="evidence" value="ECO:0000314"/>
    <property type="project" value="UniProtKB"/>
</dbReference>
<dbReference type="GO" id="GO:0005940">
    <property type="term" value="C:septin ring"/>
    <property type="evidence" value="ECO:0000318"/>
    <property type="project" value="GO_Central"/>
</dbReference>
<dbReference type="GO" id="GO:0001725">
    <property type="term" value="C:stress fiber"/>
    <property type="evidence" value="ECO:0000314"/>
    <property type="project" value="UniProtKB"/>
</dbReference>
<dbReference type="GO" id="GO:0005525">
    <property type="term" value="F:GTP binding"/>
    <property type="evidence" value="ECO:0007669"/>
    <property type="project" value="UniProtKB-KW"/>
</dbReference>
<dbReference type="GO" id="GO:0003924">
    <property type="term" value="F:GTPase activity"/>
    <property type="evidence" value="ECO:0000318"/>
    <property type="project" value="GO_Central"/>
</dbReference>
<dbReference type="GO" id="GO:0060090">
    <property type="term" value="F:molecular adaptor activity"/>
    <property type="evidence" value="ECO:0000318"/>
    <property type="project" value="GO_Central"/>
</dbReference>
<dbReference type="GO" id="GO:0061640">
    <property type="term" value="P:cytoskeleton-dependent cytokinesis"/>
    <property type="evidence" value="ECO:0000318"/>
    <property type="project" value="GO_Central"/>
</dbReference>
<dbReference type="GO" id="GO:0008104">
    <property type="term" value="P:protein localization"/>
    <property type="evidence" value="ECO:0000318"/>
    <property type="project" value="GO_Central"/>
</dbReference>
<dbReference type="CDD" id="cd01850">
    <property type="entry name" value="CDC_Septin"/>
    <property type="match status" value="1"/>
</dbReference>
<dbReference type="FunFam" id="3.40.50.300:FF:000036">
    <property type="entry name" value="septin-6 isoform X2"/>
    <property type="match status" value="1"/>
</dbReference>
<dbReference type="Gene3D" id="3.40.50.300">
    <property type="entry name" value="P-loop containing nucleotide triphosphate hydrolases"/>
    <property type="match status" value="1"/>
</dbReference>
<dbReference type="InterPro" id="IPR030379">
    <property type="entry name" value="G_SEPTIN_dom"/>
</dbReference>
<dbReference type="InterPro" id="IPR027417">
    <property type="entry name" value="P-loop_NTPase"/>
</dbReference>
<dbReference type="InterPro" id="IPR016491">
    <property type="entry name" value="Septin"/>
</dbReference>
<dbReference type="PANTHER" id="PTHR18884">
    <property type="entry name" value="SEPTIN"/>
    <property type="match status" value="1"/>
</dbReference>
<dbReference type="Pfam" id="PF00735">
    <property type="entry name" value="Septin"/>
    <property type="match status" value="1"/>
</dbReference>
<dbReference type="PIRSF" id="PIRSF006698">
    <property type="entry name" value="Septin"/>
    <property type="match status" value="1"/>
</dbReference>
<dbReference type="SUPFAM" id="SSF52540">
    <property type="entry name" value="P-loop containing nucleoside triphosphate hydrolases"/>
    <property type="match status" value="1"/>
</dbReference>
<dbReference type="PROSITE" id="PS51719">
    <property type="entry name" value="G_SEPTIN"/>
    <property type="match status" value="1"/>
</dbReference>
<keyword id="KW-0002">3D-structure</keyword>
<keyword id="KW-0007">Acetylation</keyword>
<keyword id="KW-0025">Alternative splicing</keyword>
<keyword id="KW-0131">Cell cycle</keyword>
<keyword id="KW-0132">Cell division</keyword>
<keyword id="KW-0966">Cell projection</keyword>
<keyword id="KW-0160">Chromosomal rearrangement</keyword>
<keyword id="KW-0175">Coiled coil</keyword>
<keyword id="KW-0963">Cytoplasm</keyword>
<keyword id="KW-0206">Cytoskeleton</keyword>
<keyword id="KW-0903">Direct protein sequencing</keyword>
<keyword id="KW-0342">GTP-binding</keyword>
<keyword id="KW-0547">Nucleotide-binding</keyword>
<keyword id="KW-0597">Phosphoprotein</keyword>
<keyword id="KW-1267">Proteomics identification</keyword>
<keyword id="KW-1185">Reference proteome</keyword>
<keyword id="KW-0770">Synapse</keyword>
<feature type="initiator methionine" description="Removed" evidence="5">
    <location>
        <position position="1"/>
    </location>
</feature>
<feature type="chain" id="PRO_0000173542" description="Septin-11">
    <location>
        <begin position="2"/>
        <end position="429"/>
    </location>
</feature>
<feature type="domain" description="Septin-type G" evidence="3">
    <location>
        <begin position="38"/>
        <end position="304"/>
    </location>
</feature>
<feature type="region of interest" description="G1 motif" evidence="3">
    <location>
        <begin position="48"/>
        <end position="55"/>
    </location>
</feature>
<feature type="region of interest" description="G3 motif" evidence="3">
    <location>
        <begin position="100"/>
        <end position="103"/>
    </location>
</feature>
<feature type="region of interest" description="G4 motif" evidence="3">
    <location>
        <begin position="183"/>
        <end position="186"/>
    </location>
</feature>
<feature type="region of interest" description="Disordered" evidence="4">
    <location>
        <begin position="398"/>
        <end position="429"/>
    </location>
</feature>
<feature type="coiled-coil region" evidence="2">
    <location>
        <begin position="320"/>
        <end position="415"/>
    </location>
</feature>
<feature type="compositionally biased region" description="Low complexity" evidence="4">
    <location>
        <begin position="401"/>
        <end position="416"/>
    </location>
</feature>
<feature type="compositionally biased region" description="Basic and acidic residues" evidence="4">
    <location>
        <begin position="417"/>
        <end position="429"/>
    </location>
</feature>
<feature type="binding site" evidence="1">
    <location>
        <begin position="48"/>
        <end position="55"/>
    </location>
    <ligand>
        <name>GTP</name>
        <dbReference type="ChEBI" id="CHEBI:37565"/>
    </ligand>
</feature>
<feature type="binding site" evidence="1">
    <location>
        <position position="103"/>
    </location>
    <ligand>
        <name>GTP</name>
        <dbReference type="ChEBI" id="CHEBI:37565"/>
    </ligand>
</feature>
<feature type="binding site" evidence="1">
    <location>
        <begin position="184"/>
        <end position="192"/>
    </location>
    <ligand>
        <name>GTP</name>
        <dbReference type="ChEBI" id="CHEBI:37565"/>
    </ligand>
</feature>
<feature type="binding site" evidence="1">
    <location>
        <position position="238"/>
    </location>
    <ligand>
        <name>GTP</name>
        <dbReference type="ChEBI" id="CHEBI:37565"/>
    </ligand>
</feature>
<feature type="binding site" evidence="1">
    <location>
        <position position="253"/>
    </location>
    <ligand>
        <name>GTP</name>
        <dbReference type="ChEBI" id="CHEBI:37565"/>
    </ligand>
</feature>
<feature type="modified residue" description="N-acetylalanine" evidence="5">
    <location>
        <position position="2"/>
    </location>
</feature>
<feature type="modified residue" description="Phosphoserine" evidence="15">
    <location>
        <position position="9"/>
    </location>
</feature>
<feature type="splice variant" id="VSP_038320" description="In isoform 2." evidence="12">
    <original>MAVAVGRPS</original>
    <variation>MEERKPAHVLRSFKYAAFM</variation>
    <location>
        <begin position="1"/>
        <end position="9"/>
    </location>
</feature>
<feature type="mutagenesis site" description="High reduction in GTPase activity. No effect on GTP-binding. Loss of filament formation." evidence="6">
    <original>G</original>
    <variation>A</variation>
    <location>
        <position position="48"/>
    </location>
</feature>
<feature type="sequence conflict" description="In Ref. 5; CAB53741." evidence="13" ref="5">
    <original>Y</original>
    <variation>H</variation>
    <location>
        <position position="142"/>
    </location>
</feature>
<feature type="sequence conflict" description="In Ref. 5; CAB53741." evidence="13" ref="5">
    <original>R</original>
    <variation>H</variation>
    <location>
        <position position="298"/>
    </location>
</feature>
<feature type="sequence conflict" description="In Ref. 5; CAB53741." evidence="13" ref="5">
    <original>E</original>
    <variation>G</variation>
    <location>
        <position position="321"/>
    </location>
</feature>
<feature type="strand" evidence="16">
    <location>
        <begin position="41"/>
        <end position="47"/>
    </location>
</feature>
<feature type="helix" evidence="16">
    <location>
        <begin position="54"/>
        <end position="62"/>
    </location>
</feature>
<feature type="strand" evidence="16">
    <location>
        <begin position="79"/>
        <end position="89"/>
    </location>
</feature>
<feature type="strand" evidence="16">
    <location>
        <begin position="92"/>
        <end position="103"/>
    </location>
</feature>
<feature type="strand" evidence="16">
    <location>
        <begin position="107"/>
        <end position="109"/>
    </location>
</feature>
<feature type="turn" evidence="16">
    <location>
        <begin position="111"/>
        <end position="114"/>
    </location>
</feature>
<feature type="helix" evidence="16">
    <location>
        <begin position="115"/>
        <end position="132"/>
    </location>
</feature>
<feature type="turn" evidence="16">
    <location>
        <begin position="139"/>
        <end position="141"/>
    </location>
</feature>
<feature type="strand" evidence="16">
    <location>
        <begin position="149"/>
        <end position="154"/>
    </location>
</feature>
<feature type="strand" evidence="16">
    <location>
        <begin position="158"/>
        <end position="160"/>
    </location>
</feature>
<feature type="helix" evidence="16">
    <location>
        <begin position="163"/>
        <end position="172"/>
    </location>
</feature>
<feature type="turn" evidence="16">
    <location>
        <begin position="173"/>
        <end position="175"/>
    </location>
</feature>
<feature type="strand" evidence="16">
    <location>
        <begin position="178"/>
        <end position="182"/>
    </location>
</feature>
<feature type="helix" evidence="16">
    <location>
        <begin position="185"/>
        <end position="187"/>
    </location>
</feature>
<feature type="turn" evidence="16">
    <location>
        <begin position="190"/>
        <end position="192"/>
    </location>
</feature>
<feature type="helix" evidence="16">
    <location>
        <begin position="193"/>
        <end position="206"/>
    </location>
</feature>
<feature type="strand" evidence="16">
    <location>
        <begin position="232"/>
        <end position="235"/>
    </location>
</feature>
<feature type="strand" evidence="16">
    <location>
        <begin position="242"/>
        <end position="245"/>
    </location>
</feature>
<feature type="strand" evidence="16">
    <location>
        <begin position="248"/>
        <end position="255"/>
    </location>
</feature>
<feature type="strand" evidence="16">
    <location>
        <begin position="258"/>
        <end position="261"/>
    </location>
</feature>
<feature type="turn" evidence="16">
    <location>
        <begin position="265"/>
        <end position="267"/>
    </location>
</feature>
<feature type="helix" evidence="16">
    <location>
        <begin position="270"/>
        <end position="277"/>
    </location>
</feature>
<feature type="turn" evidence="16">
    <location>
        <begin position="278"/>
        <end position="280"/>
    </location>
</feature>
<feature type="helix" evidence="16">
    <location>
        <begin position="282"/>
        <end position="291"/>
    </location>
</feature>
<feature type="helix" evidence="16">
    <location>
        <begin position="293"/>
        <end position="298"/>
    </location>
</feature>
<name>SEP11_HUMAN</name>
<organism>
    <name type="scientific">Homo sapiens</name>
    <name type="common">Human</name>
    <dbReference type="NCBI Taxonomy" id="9606"/>
    <lineage>
        <taxon>Eukaryota</taxon>
        <taxon>Metazoa</taxon>
        <taxon>Chordata</taxon>
        <taxon>Craniata</taxon>
        <taxon>Vertebrata</taxon>
        <taxon>Euteleostomi</taxon>
        <taxon>Mammalia</taxon>
        <taxon>Eutheria</taxon>
        <taxon>Euarchontoglires</taxon>
        <taxon>Primates</taxon>
        <taxon>Haplorrhini</taxon>
        <taxon>Catarrhini</taxon>
        <taxon>Hominidae</taxon>
        <taxon>Homo</taxon>
    </lineage>
</organism>
<evidence type="ECO:0000250" key="1"/>
<evidence type="ECO:0000255" key="2"/>
<evidence type="ECO:0000255" key="3">
    <source>
        <dbReference type="PROSITE-ProRule" id="PRU01056"/>
    </source>
</evidence>
<evidence type="ECO:0000256" key="4">
    <source>
        <dbReference type="SAM" id="MobiDB-lite"/>
    </source>
</evidence>
<evidence type="ECO:0000269" key="5">
    <source>
    </source>
</evidence>
<evidence type="ECO:0000269" key="6">
    <source>
    </source>
</evidence>
<evidence type="ECO:0000269" key="7">
    <source>
    </source>
</evidence>
<evidence type="ECO:0000269" key="8">
    <source>
    </source>
</evidence>
<evidence type="ECO:0000269" key="9">
    <source>
    </source>
</evidence>
<evidence type="ECO:0000269" key="10">
    <source>
    </source>
</evidence>
<evidence type="ECO:0000269" key="11">
    <source>
    </source>
</evidence>
<evidence type="ECO:0000303" key="12">
    <source>
    </source>
</evidence>
<evidence type="ECO:0000305" key="13"/>
<evidence type="ECO:0000312" key="14">
    <source>
        <dbReference type="HGNC" id="HGNC:25589"/>
    </source>
</evidence>
<evidence type="ECO:0007744" key="15">
    <source>
    </source>
</evidence>
<evidence type="ECO:0007829" key="16">
    <source>
        <dbReference type="PDB" id="6UPQ"/>
    </source>
</evidence>
<sequence length="429" mass="49398">MAVAVGRPSNEELRNLSLSGHVGFDSLPDQLVNKSTSQGFCFNILCVGETGIGKSTLMDTLFNTKFESDPATHNEPGVRLKARSYELQESNVRLKLTIVDTVGFGDQINKDDSYKPIVEYIDAQFEAYLQEELKIKRSLFNYHDTRIHACLYFIAPTGHSLKSLDLVTMKKLDSKVNIIPIIAKADTIAKNELHKFKSKIMSELVSNGVQIYQFPTDEETVAEINATMSVHLPFAVVGSTEEVKIGNKMAKARQYPWGVVQVENENHCDFVKLREMLIRVNMEDLREQTHTRHYELYRRCKLEEMGFKDTDPDSKPFSLQETYEAKRNEFLGELQKKEEEMRQMFVMRVKEKEAELKEAEKELHEKFDLLKRTHQEEKKKVEDKKKELEEEVNNFQKKKAAAQLLQSQAQQSGAQQTKKDKDKKNASFT</sequence>